<sequence length="103" mass="11328">MTGRTVTRADLASAVCRKVGLSYTESAALVELILSEISDSLVKGEMVKLSCFATFQVRSKSRRIGRNPKTGIEAPIPPRRVVTFKAANILKQRILDVHCAKQK</sequence>
<dbReference type="EMBL" id="CP000524">
    <property type="protein sequence ID" value="ABM45644.1"/>
    <property type="molecule type" value="Genomic_DNA"/>
</dbReference>
<dbReference type="RefSeq" id="WP_005766852.1">
    <property type="nucleotide sequence ID" value="NC_008783.1"/>
</dbReference>
<dbReference type="SMR" id="A1USJ0"/>
<dbReference type="STRING" id="360095.BARBAKC583_0639"/>
<dbReference type="GeneID" id="4684626"/>
<dbReference type="KEGG" id="bbk:BARBAKC583_0639"/>
<dbReference type="PATRIC" id="fig|360095.6.peg.623"/>
<dbReference type="eggNOG" id="COG0776">
    <property type="taxonomic scope" value="Bacteria"/>
</dbReference>
<dbReference type="HOGENOM" id="CLU_105066_1_1_5"/>
<dbReference type="OrthoDB" id="9797747at2"/>
<dbReference type="Proteomes" id="UP000000643">
    <property type="component" value="Chromosome"/>
</dbReference>
<dbReference type="GO" id="GO:0005829">
    <property type="term" value="C:cytosol"/>
    <property type="evidence" value="ECO:0007669"/>
    <property type="project" value="TreeGrafter"/>
</dbReference>
<dbReference type="GO" id="GO:0003677">
    <property type="term" value="F:DNA binding"/>
    <property type="evidence" value="ECO:0007669"/>
    <property type="project" value="UniProtKB-UniRule"/>
</dbReference>
<dbReference type="GO" id="GO:0030527">
    <property type="term" value="F:structural constituent of chromatin"/>
    <property type="evidence" value="ECO:0007669"/>
    <property type="project" value="InterPro"/>
</dbReference>
<dbReference type="GO" id="GO:0006310">
    <property type="term" value="P:DNA recombination"/>
    <property type="evidence" value="ECO:0007669"/>
    <property type="project" value="UniProtKB-UniRule"/>
</dbReference>
<dbReference type="GO" id="GO:0009893">
    <property type="term" value="P:positive regulation of metabolic process"/>
    <property type="evidence" value="ECO:0007669"/>
    <property type="project" value="UniProtKB-ARBA"/>
</dbReference>
<dbReference type="GO" id="GO:0006355">
    <property type="term" value="P:regulation of DNA-templated transcription"/>
    <property type="evidence" value="ECO:0007669"/>
    <property type="project" value="UniProtKB-UniRule"/>
</dbReference>
<dbReference type="GO" id="GO:0006417">
    <property type="term" value="P:regulation of translation"/>
    <property type="evidence" value="ECO:0007669"/>
    <property type="project" value="UniProtKB-UniRule"/>
</dbReference>
<dbReference type="CDD" id="cd13835">
    <property type="entry name" value="IHF_A"/>
    <property type="match status" value="1"/>
</dbReference>
<dbReference type="Gene3D" id="4.10.520.10">
    <property type="entry name" value="IHF-like DNA-binding proteins"/>
    <property type="match status" value="1"/>
</dbReference>
<dbReference type="HAMAP" id="MF_00380">
    <property type="entry name" value="IHF_alpha"/>
    <property type="match status" value="1"/>
</dbReference>
<dbReference type="InterPro" id="IPR000119">
    <property type="entry name" value="Hist_DNA-bd"/>
</dbReference>
<dbReference type="InterPro" id="IPR010992">
    <property type="entry name" value="IHF-like_DNA-bd_dom_sf"/>
</dbReference>
<dbReference type="InterPro" id="IPR005684">
    <property type="entry name" value="IHF_alpha"/>
</dbReference>
<dbReference type="NCBIfam" id="NF001401">
    <property type="entry name" value="PRK00285.1"/>
    <property type="match status" value="1"/>
</dbReference>
<dbReference type="PANTHER" id="PTHR33175">
    <property type="entry name" value="DNA-BINDING PROTEIN HU"/>
    <property type="match status" value="1"/>
</dbReference>
<dbReference type="PANTHER" id="PTHR33175:SF2">
    <property type="entry name" value="INTEGRATION HOST FACTOR SUBUNIT ALPHA"/>
    <property type="match status" value="1"/>
</dbReference>
<dbReference type="Pfam" id="PF00216">
    <property type="entry name" value="Bac_DNA_binding"/>
    <property type="match status" value="1"/>
</dbReference>
<dbReference type="PRINTS" id="PR01727">
    <property type="entry name" value="DNABINDINGHU"/>
</dbReference>
<dbReference type="SMART" id="SM00411">
    <property type="entry name" value="BHL"/>
    <property type="match status" value="1"/>
</dbReference>
<dbReference type="SUPFAM" id="SSF47729">
    <property type="entry name" value="IHF-like DNA-binding proteins"/>
    <property type="match status" value="1"/>
</dbReference>
<gene>
    <name evidence="1" type="primary">ihfA</name>
    <name evidence="1" type="synonym">himA</name>
    <name type="ordered locus">BARBAKC583_0639</name>
</gene>
<evidence type="ECO:0000255" key="1">
    <source>
        <dbReference type="HAMAP-Rule" id="MF_00380"/>
    </source>
</evidence>
<proteinExistence type="inferred from homology"/>
<comment type="function">
    <text evidence="1">This protein is one of the two subunits of integration host factor, a specific DNA-binding protein that functions in genetic recombination as well as in transcriptional and translational control.</text>
</comment>
<comment type="subunit">
    <text evidence="1">Heterodimer of an alpha and a beta chain.</text>
</comment>
<comment type="similarity">
    <text evidence="1">Belongs to the bacterial histone-like protein family.</text>
</comment>
<accession>A1USJ0</accession>
<organism>
    <name type="scientific">Bartonella bacilliformis (strain ATCC 35685 / KC583 / Herrer 020/F12,63)</name>
    <dbReference type="NCBI Taxonomy" id="360095"/>
    <lineage>
        <taxon>Bacteria</taxon>
        <taxon>Pseudomonadati</taxon>
        <taxon>Pseudomonadota</taxon>
        <taxon>Alphaproteobacteria</taxon>
        <taxon>Hyphomicrobiales</taxon>
        <taxon>Bartonellaceae</taxon>
        <taxon>Bartonella</taxon>
    </lineage>
</organism>
<reference key="1">
    <citation type="submission" date="2006-12" db="EMBL/GenBank/DDBJ databases">
        <authorList>
            <person name="Hendrix L."/>
            <person name="Mohamoud Y."/>
            <person name="Radune D."/>
            <person name="Shvartsbeyn A."/>
            <person name="Daugherty S."/>
            <person name="Dodson R."/>
            <person name="Durkin A.S."/>
            <person name="Harkins D."/>
            <person name="Huot H."/>
            <person name="Kothari S.P."/>
            <person name="Madupu R."/>
            <person name="Li J."/>
            <person name="Nelson W.C."/>
            <person name="Shrivastava S."/>
            <person name="Giglio M.G."/>
            <person name="Haft D."/>
            <person name="Selengut J."/>
            <person name="Fraser-Ligget C."/>
            <person name="Seshadri R."/>
        </authorList>
    </citation>
    <scope>NUCLEOTIDE SEQUENCE [LARGE SCALE GENOMIC DNA]</scope>
    <source>
        <strain>ATCC 35685 / KC583 / Herrer 020/F12,63</strain>
    </source>
</reference>
<keyword id="KW-0233">DNA recombination</keyword>
<keyword id="KW-0238">DNA-binding</keyword>
<keyword id="KW-0804">Transcription</keyword>
<keyword id="KW-0805">Transcription regulation</keyword>
<keyword id="KW-0810">Translation regulation</keyword>
<feature type="chain" id="PRO_1000060533" description="Integration host factor subunit alpha">
    <location>
        <begin position="1"/>
        <end position="103"/>
    </location>
</feature>
<protein>
    <recommendedName>
        <fullName evidence="1">Integration host factor subunit alpha</fullName>
        <shortName evidence="1">IHF-alpha</shortName>
    </recommendedName>
</protein>
<name>IHFA_BARBK</name>